<feature type="chain" id="PRO_0000164590" description="D-aminoacyl-tRNA deacylase">
    <location>
        <begin position="1"/>
        <end position="150"/>
    </location>
</feature>
<feature type="short sequence motif" description="Gly-cisPro motif, important for rejection of L-amino acids" evidence="1">
    <location>
        <begin position="136"/>
        <end position="137"/>
    </location>
</feature>
<proteinExistence type="inferred from homology"/>
<dbReference type="EC" id="3.1.1.96" evidence="1"/>
<dbReference type="EMBL" id="BX571857">
    <property type="protein sequence ID" value="CAG43370.1"/>
    <property type="molecule type" value="Genomic_DNA"/>
</dbReference>
<dbReference type="RefSeq" id="WP_000869983.1">
    <property type="nucleotide sequence ID" value="NC_002953.3"/>
</dbReference>
<dbReference type="SMR" id="Q6G8T6"/>
<dbReference type="KEGG" id="sas:SAS1569"/>
<dbReference type="HOGENOM" id="CLU_076901_1_0_9"/>
<dbReference type="GO" id="GO:0005737">
    <property type="term" value="C:cytoplasm"/>
    <property type="evidence" value="ECO:0007669"/>
    <property type="project" value="UniProtKB-SubCell"/>
</dbReference>
<dbReference type="GO" id="GO:0051500">
    <property type="term" value="F:D-tyrosyl-tRNA(Tyr) deacylase activity"/>
    <property type="evidence" value="ECO:0007669"/>
    <property type="project" value="TreeGrafter"/>
</dbReference>
<dbReference type="GO" id="GO:0106026">
    <property type="term" value="F:Gly-tRNA(Ala) deacylase activity"/>
    <property type="evidence" value="ECO:0007669"/>
    <property type="project" value="UniProtKB-UniRule"/>
</dbReference>
<dbReference type="GO" id="GO:0043908">
    <property type="term" value="F:Ser(Gly)-tRNA(Ala) hydrolase activity"/>
    <property type="evidence" value="ECO:0007669"/>
    <property type="project" value="UniProtKB-UniRule"/>
</dbReference>
<dbReference type="GO" id="GO:0000049">
    <property type="term" value="F:tRNA binding"/>
    <property type="evidence" value="ECO:0007669"/>
    <property type="project" value="UniProtKB-UniRule"/>
</dbReference>
<dbReference type="GO" id="GO:0019478">
    <property type="term" value="P:D-amino acid catabolic process"/>
    <property type="evidence" value="ECO:0007669"/>
    <property type="project" value="UniProtKB-UniRule"/>
</dbReference>
<dbReference type="FunFam" id="3.50.80.10:FF:000005">
    <property type="entry name" value="D-aminoacyl-tRNA deacylase"/>
    <property type="match status" value="1"/>
</dbReference>
<dbReference type="Gene3D" id="3.50.80.10">
    <property type="entry name" value="D-tyrosyl-tRNA(Tyr) deacylase"/>
    <property type="match status" value="1"/>
</dbReference>
<dbReference type="HAMAP" id="MF_00518">
    <property type="entry name" value="Deacylase_Dtd"/>
    <property type="match status" value="1"/>
</dbReference>
<dbReference type="InterPro" id="IPR003732">
    <property type="entry name" value="Daa-tRNA_deacyls_DTD"/>
</dbReference>
<dbReference type="InterPro" id="IPR023509">
    <property type="entry name" value="DTD-like_sf"/>
</dbReference>
<dbReference type="NCBIfam" id="TIGR00256">
    <property type="entry name" value="D-aminoacyl-tRNA deacylase"/>
    <property type="match status" value="1"/>
</dbReference>
<dbReference type="PANTHER" id="PTHR10472:SF5">
    <property type="entry name" value="D-AMINOACYL-TRNA DEACYLASE 1"/>
    <property type="match status" value="1"/>
</dbReference>
<dbReference type="PANTHER" id="PTHR10472">
    <property type="entry name" value="D-TYROSYL-TRNA TYR DEACYLASE"/>
    <property type="match status" value="1"/>
</dbReference>
<dbReference type="Pfam" id="PF02580">
    <property type="entry name" value="Tyr_Deacylase"/>
    <property type="match status" value="1"/>
</dbReference>
<dbReference type="SUPFAM" id="SSF69500">
    <property type="entry name" value="DTD-like"/>
    <property type="match status" value="1"/>
</dbReference>
<comment type="function">
    <text evidence="1">An aminoacyl-tRNA editing enzyme that deacylates mischarged D-aminoacyl-tRNAs. Also deacylates mischarged glycyl-tRNA(Ala), protecting cells against glycine mischarging by AlaRS. Acts via tRNA-based rather than protein-based catalysis; rejects L-amino acids rather than detecting D-amino acids in the active site. By recycling D-aminoacyl-tRNA to D-amino acids and free tRNA molecules, this enzyme counteracts the toxicity associated with the formation of D-aminoacyl-tRNA entities in vivo and helps enforce protein L-homochirality.</text>
</comment>
<comment type="catalytic activity">
    <reaction evidence="1">
        <text>glycyl-tRNA(Ala) + H2O = tRNA(Ala) + glycine + H(+)</text>
        <dbReference type="Rhea" id="RHEA:53744"/>
        <dbReference type="Rhea" id="RHEA-COMP:9657"/>
        <dbReference type="Rhea" id="RHEA-COMP:13640"/>
        <dbReference type="ChEBI" id="CHEBI:15377"/>
        <dbReference type="ChEBI" id="CHEBI:15378"/>
        <dbReference type="ChEBI" id="CHEBI:57305"/>
        <dbReference type="ChEBI" id="CHEBI:78442"/>
        <dbReference type="ChEBI" id="CHEBI:78522"/>
        <dbReference type="EC" id="3.1.1.96"/>
    </reaction>
</comment>
<comment type="catalytic activity">
    <reaction evidence="1">
        <text>a D-aminoacyl-tRNA + H2O = a tRNA + a D-alpha-amino acid + H(+)</text>
        <dbReference type="Rhea" id="RHEA:13953"/>
        <dbReference type="Rhea" id="RHEA-COMP:10123"/>
        <dbReference type="Rhea" id="RHEA-COMP:10124"/>
        <dbReference type="ChEBI" id="CHEBI:15377"/>
        <dbReference type="ChEBI" id="CHEBI:15378"/>
        <dbReference type="ChEBI" id="CHEBI:59871"/>
        <dbReference type="ChEBI" id="CHEBI:78442"/>
        <dbReference type="ChEBI" id="CHEBI:79333"/>
        <dbReference type="EC" id="3.1.1.96"/>
    </reaction>
</comment>
<comment type="subunit">
    <text evidence="1">Homodimer.</text>
</comment>
<comment type="subcellular location">
    <subcellularLocation>
        <location evidence="1">Cytoplasm</location>
    </subcellularLocation>
</comment>
<comment type="domain">
    <text evidence="1">A Gly-cisPro motif from one monomer fits into the active site of the other monomer to allow specific chiral rejection of L-amino acids.</text>
</comment>
<comment type="similarity">
    <text evidence="1">Belongs to the DTD family.</text>
</comment>
<gene>
    <name evidence="1" type="primary">dtd</name>
    <name type="ordered locus">SAS1569</name>
</gene>
<organism>
    <name type="scientific">Staphylococcus aureus (strain MSSA476)</name>
    <dbReference type="NCBI Taxonomy" id="282459"/>
    <lineage>
        <taxon>Bacteria</taxon>
        <taxon>Bacillati</taxon>
        <taxon>Bacillota</taxon>
        <taxon>Bacilli</taxon>
        <taxon>Bacillales</taxon>
        <taxon>Staphylococcaceae</taxon>
        <taxon>Staphylococcus</taxon>
    </lineage>
</organism>
<accession>Q6G8T6</accession>
<evidence type="ECO:0000255" key="1">
    <source>
        <dbReference type="HAMAP-Rule" id="MF_00518"/>
    </source>
</evidence>
<sequence>MKVVVQRVKEASVTNDTLNNQIKKGYCLLVGIGQNSTEQDADVIAKKIANARLFEDDNNKLNFNIQQMNGEILSVSQFTLYADVKKGNRPGFSNSKNPDQAVKIYEYFNDALRAYGLTVKTGEFGTHMNVSINNDGPVTIIYESQDGKIQ</sequence>
<reference key="1">
    <citation type="journal article" date="2004" name="Proc. Natl. Acad. Sci. U.S.A.">
        <title>Complete genomes of two clinical Staphylococcus aureus strains: evidence for the rapid evolution of virulence and drug resistance.</title>
        <authorList>
            <person name="Holden M.T.G."/>
            <person name="Feil E.J."/>
            <person name="Lindsay J.A."/>
            <person name="Peacock S.J."/>
            <person name="Day N.P.J."/>
            <person name="Enright M.C."/>
            <person name="Foster T.J."/>
            <person name="Moore C.E."/>
            <person name="Hurst L."/>
            <person name="Atkin R."/>
            <person name="Barron A."/>
            <person name="Bason N."/>
            <person name="Bentley S.D."/>
            <person name="Chillingworth C."/>
            <person name="Chillingworth T."/>
            <person name="Churcher C."/>
            <person name="Clark L."/>
            <person name="Corton C."/>
            <person name="Cronin A."/>
            <person name="Doggett J."/>
            <person name="Dowd L."/>
            <person name="Feltwell T."/>
            <person name="Hance Z."/>
            <person name="Harris B."/>
            <person name="Hauser H."/>
            <person name="Holroyd S."/>
            <person name="Jagels K."/>
            <person name="James K.D."/>
            <person name="Lennard N."/>
            <person name="Line A."/>
            <person name="Mayes R."/>
            <person name="Moule S."/>
            <person name="Mungall K."/>
            <person name="Ormond D."/>
            <person name="Quail M.A."/>
            <person name="Rabbinowitsch E."/>
            <person name="Rutherford K.M."/>
            <person name="Sanders M."/>
            <person name="Sharp S."/>
            <person name="Simmonds M."/>
            <person name="Stevens K."/>
            <person name="Whitehead S."/>
            <person name="Barrell B.G."/>
            <person name="Spratt B.G."/>
            <person name="Parkhill J."/>
        </authorList>
    </citation>
    <scope>NUCLEOTIDE SEQUENCE [LARGE SCALE GENOMIC DNA]</scope>
    <source>
        <strain>MSSA476</strain>
    </source>
</reference>
<name>DTD_STAAS</name>
<protein>
    <recommendedName>
        <fullName evidence="1">D-aminoacyl-tRNA deacylase</fullName>
        <shortName evidence="1">DTD</shortName>
        <ecNumber evidence="1">3.1.1.96</ecNumber>
    </recommendedName>
    <alternativeName>
        <fullName evidence="1">Gly-tRNA(Ala) deacylase</fullName>
    </alternativeName>
</protein>
<keyword id="KW-0963">Cytoplasm</keyword>
<keyword id="KW-0378">Hydrolase</keyword>
<keyword id="KW-0694">RNA-binding</keyword>
<keyword id="KW-0820">tRNA-binding</keyword>